<organism>
    <name type="scientific">Cycas taitungensis</name>
    <name type="common">Prince sago</name>
    <name type="synonym">Cycas taiwaniana</name>
    <dbReference type="NCBI Taxonomy" id="54799"/>
    <lineage>
        <taxon>Eukaryota</taxon>
        <taxon>Viridiplantae</taxon>
        <taxon>Streptophyta</taxon>
        <taxon>Embryophyta</taxon>
        <taxon>Tracheophyta</taxon>
        <taxon>Spermatophyta</taxon>
        <taxon>Cycadidae</taxon>
        <taxon>Cycadales</taxon>
        <taxon>Cycadaceae</taxon>
        <taxon>Cycas</taxon>
    </lineage>
</organism>
<accession>A6H5K3</accession>
<feature type="chain" id="PRO_0000356800" description="Large ribosomal subunit protein bL33c">
    <location>
        <begin position="1"/>
        <end position="66"/>
    </location>
</feature>
<protein>
    <recommendedName>
        <fullName evidence="1">Large ribosomal subunit protein bL33c</fullName>
    </recommendedName>
    <alternativeName>
        <fullName evidence="2">50S ribosomal protein L33, chloroplastic</fullName>
    </alternativeName>
</protein>
<evidence type="ECO:0000255" key="1">
    <source>
        <dbReference type="HAMAP-Rule" id="MF_00294"/>
    </source>
</evidence>
<evidence type="ECO:0000305" key="2"/>
<reference key="1">
    <citation type="journal article" date="2007" name="Mol. Biol. Evol.">
        <title>Chloroplast genome (cpDNA) of Cycas taitungensis and 56 cp protein-coding genes of Gnetum parvifolium: insights into cpDNA evolution and phylogeny of extant seed plants.</title>
        <authorList>
            <person name="Wu C.-S."/>
            <person name="Wang Y.-N."/>
            <person name="Liu S.-M."/>
            <person name="Chaw S.-M."/>
        </authorList>
    </citation>
    <scope>NUCLEOTIDE SEQUENCE [LARGE SCALE GENOMIC DNA]</scope>
</reference>
<comment type="subcellular location">
    <subcellularLocation>
        <location>Plastid</location>
        <location>Chloroplast</location>
    </subcellularLocation>
</comment>
<comment type="similarity">
    <text evidence="1">Belongs to the bacterial ribosomal protein bL33 family.</text>
</comment>
<keyword id="KW-0150">Chloroplast</keyword>
<keyword id="KW-0934">Plastid</keyword>
<keyword id="KW-0687">Ribonucleoprotein</keyword>
<keyword id="KW-0689">Ribosomal protein</keyword>
<dbReference type="EMBL" id="AP009339">
    <property type="protein sequence ID" value="BAF64969.1"/>
    <property type="molecule type" value="Genomic_DNA"/>
</dbReference>
<dbReference type="RefSeq" id="YP_001312228.1">
    <property type="nucleotide sequence ID" value="NC_009618.1"/>
</dbReference>
<dbReference type="GeneID" id="5309599"/>
<dbReference type="GO" id="GO:0009507">
    <property type="term" value="C:chloroplast"/>
    <property type="evidence" value="ECO:0007669"/>
    <property type="project" value="UniProtKB-SubCell"/>
</dbReference>
<dbReference type="GO" id="GO:1990904">
    <property type="term" value="C:ribonucleoprotein complex"/>
    <property type="evidence" value="ECO:0007669"/>
    <property type="project" value="UniProtKB-KW"/>
</dbReference>
<dbReference type="GO" id="GO:0005840">
    <property type="term" value="C:ribosome"/>
    <property type="evidence" value="ECO:0007669"/>
    <property type="project" value="UniProtKB-KW"/>
</dbReference>
<dbReference type="GO" id="GO:0003735">
    <property type="term" value="F:structural constituent of ribosome"/>
    <property type="evidence" value="ECO:0007669"/>
    <property type="project" value="InterPro"/>
</dbReference>
<dbReference type="GO" id="GO:0006412">
    <property type="term" value="P:translation"/>
    <property type="evidence" value="ECO:0007669"/>
    <property type="project" value="UniProtKB-UniRule"/>
</dbReference>
<dbReference type="Gene3D" id="2.20.28.120">
    <property type="entry name" value="Ribosomal protein L33"/>
    <property type="match status" value="1"/>
</dbReference>
<dbReference type="HAMAP" id="MF_00294">
    <property type="entry name" value="Ribosomal_bL33"/>
    <property type="match status" value="1"/>
</dbReference>
<dbReference type="InterPro" id="IPR001705">
    <property type="entry name" value="Ribosomal_bL33"/>
</dbReference>
<dbReference type="InterPro" id="IPR038584">
    <property type="entry name" value="Ribosomal_bL33_sf"/>
</dbReference>
<dbReference type="InterPro" id="IPR011332">
    <property type="entry name" value="Ribosomal_zn-bd"/>
</dbReference>
<dbReference type="NCBIfam" id="NF001764">
    <property type="entry name" value="PRK00504.1"/>
    <property type="match status" value="1"/>
</dbReference>
<dbReference type="NCBIfam" id="NF001860">
    <property type="entry name" value="PRK00595.1"/>
    <property type="match status" value="1"/>
</dbReference>
<dbReference type="NCBIfam" id="TIGR01023">
    <property type="entry name" value="rpmG_bact"/>
    <property type="match status" value="1"/>
</dbReference>
<dbReference type="PANTHER" id="PTHR43168">
    <property type="entry name" value="50S RIBOSOMAL PROTEIN L33, CHLOROPLASTIC"/>
    <property type="match status" value="1"/>
</dbReference>
<dbReference type="PANTHER" id="PTHR43168:SF2">
    <property type="entry name" value="LARGE RIBOSOMAL SUBUNIT PROTEIN BL33C"/>
    <property type="match status" value="1"/>
</dbReference>
<dbReference type="Pfam" id="PF00471">
    <property type="entry name" value="Ribosomal_L33"/>
    <property type="match status" value="1"/>
</dbReference>
<dbReference type="SUPFAM" id="SSF57829">
    <property type="entry name" value="Zn-binding ribosomal proteins"/>
    <property type="match status" value="1"/>
</dbReference>
<gene>
    <name evidence="1" type="primary">rpl33</name>
</gene>
<proteinExistence type="inferred from homology"/>
<sequence length="66" mass="7678">MAKGGDVRVKITLECTSCTRDSVDKKYPGVSRYITQKNRRNTPIRSELKKFCPYCYKHTIHGEIKK</sequence>
<geneLocation type="chloroplast"/>
<name>RK33_CYCTA</name>